<dbReference type="EMBL" id="U18778">
    <property type="protein sequence ID" value="AAB64551.1"/>
    <property type="molecule type" value="Genomic_DNA"/>
</dbReference>
<dbReference type="EMBL" id="X81066">
    <property type="protein sequence ID" value="CAA56952.1"/>
    <property type="molecule type" value="Genomic_DNA"/>
</dbReference>
<dbReference type="EMBL" id="BK006939">
    <property type="protein sequence ID" value="DAA07670.1"/>
    <property type="molecule type" value="Genomic_DNA"/>
</dbReference>
<dbReference type="PIR" id="S50476">
    <property type="entry name" value="S50476"/>
</dbReference>
<dbReference type="RefSeq" id="NP_010934.3">
    <property type="nucleotide sequence ID" value="NM_001178909.3"/>
</dbReference>
<dbReference type="PDB" id="2FTX">
    <property type="method" value="X-ray"/>
    <property type="resolution" value="1.90 A"/>
    <property type="chains" value="A=133-221"/>
</dbReference>
<dbReference type="PDB" id="2FV4">
    <property type="method" value="NMR"/>
    <property type="chains" value="A=128-221"/>
</dbReference>
<dbReference type="PDB" id="4GEQ">
    <property type="method" value="X-ray"/>
    <property type="resolution" value="2.01 A"/>
    <property type="chains" value="A/C=133-221"/>
</dbReference>
<dbReference type="PDB" id="5T6J">
    <property type="method" value="X-ray"/>
    <property type="resolution" value="1.75 A"/>
    <property type="chains" value="B=133-221"/>
</dbReference>
<dbReference type="PDB" id="5TCS">
    <property type="method" value="X-ray"/>
    <property type="resolution" value="2.83 A"/>
    <property type="chains" value="D=1-31, D=138-221"/>
</dbReference>
<dbReference type="PDB" id="5TD8">
    <property type="method" value="X-ray"/>
    <property type="resolution" value="7.53 A"/>
    <property type="chains" value="D=1-221"/>
</dbReference>
<dbReference type="PDB" id="7KDF">
    <property type="method" value="X-ray"/>
    <property type="resolution" value="2.72 A"/>
    <property type="chains" value="D=137-221"/>
</dbReference>
<dbReference type="PDB" id="8V10">
    <property type="method" value="X-ray"/>
    <property type="resolution" value="3.02 A"/>
    <property type="chains" value="D=137-221"/>
</dbReference>
<dbReference type="PDB" id="8V11">
    <property type="method" value="X-ray"/>
    <property type="resolution" value="3.95 A"/>
    <property type="chains" value="D/H=137-220"/>
</dbReference>
<dbReference type="PDBsum" id="2FTX"/>
<dbReference type="PDBsum" id="2FV4"/>
<dbReference type="PDBsum" id="4GEQ"/>
<dbReference type="PDBsum" id="5T6J"/>
<dbReference type="PDBsum" id="5TCS"/>
<dbReference type="PDBsum" id="5TD8"/>
<dbReference type="PDBsum" id="7KDF"/>
<dbReference type="PDBsum" id="8V10"/>
<dbReference type="PDBsum" id="8V11"/>
<dbReference type="SMR" id="P40014"/>
<dbReference type="BioGRID" id="36751">
    <property type="interactions" value="196"/>
</dbReference>
<dbReference type="ComplexPortal" id="CPX-548">
    <property type="entry name" value="NDC80 complex"/>
</dbReference>
<dbReference type="DIP" id="DIP-2990N"/>
<dbReference type="FunCoup" id="P40014">
    <property type="interactions" value="189"/>
</dbReference>
<dbReference type="IntAct" id="P40014">
    <property type="interactions" value="17"/>
</dbReference>
<dbReference type="MINT" id="P40014"/>
<dbReference type="STRING" id="4932.YER018C"/>
<dbReference type="iPTMnet" id="P40014"/>
<dbReference type="PaxDb" id="4932-YER018C"/>
<dbReference type="PeptideAtlas" id="P40014"/>
<dbReference type="EnsemblFungi" id="YER018C_mRNA">
    <property type="protein sequence ID" value="YER018C"/>
    <property type="gene ID" value="YER018C"/>
</dbReference>
<dbReference type="GeneID" id="856738"/>
<dbReference type="KEGG" id="sce:YER018C"/>
<dbReference type="AGR" id="SGD:S000000820"/>
<dbReference type="SGD" id="S000000820">
    <property type="gene designation" value="SPC25"/>
</dbReference>
<dbReference type="VEuPathDB" id="FungiDB:YER018C"/>
<dbReference type="eggNOG" id="KOG4657">
    <property type="taxonomic scope" value="Eukaryota"/>
</dbReference>
<dbReference type="HOGENOM" id="CLU_085127_1_0_1"/>
<dbReference type="InParanoid" id="P40014"/>
<dbReference type="OMA" id="FRMNLAD"/>
<dbReference type="OrthoDB" id="4056921at2759"/>
<dbReference type="BioCyc" id="YEAST:G3O-30203-MONOMER"/>
<dbReference type="BioGRID-ORCS" id="856738">
    <property type="hits" value="7 hits in 10 CRISPR screens"/>
</dbReference>
<dbReference type="CD-CODE" id="876000F7">
    <property type="entry name" value="Centrosome"/>
</dbReference>
<dbReference type="PRO" id="PR:P40014"/>
<dbReference type="Proteomes" id="UP000002311">
    <property type="component" value="Chromosome V"/>
</dbReference>
<dbReference type="RNAct" id="P40014">
    <property type="molecule type" value="protein"/>
</dbReference>
<dbReference type="GO" id="GO:0000776">
    <property type="term" value="C:kinetochore"/>
    <property type="evidence" value="ECO:0000314"/>
    <property type="project" value="SGD"/>
</dbReference>
<dbReference type="GO" id="GO:0031262">
    <property type="term" value="C:Ndc80 complex"/>
    <property type="evidence" value="ECO:0000314"/>
    <property type="project" value="SGD"/>
</dbReference>
<dbReference type="GO" id="GO:0005634">
    <property type="term" value="C:nucleus"/>
    <property type="evidence" value="ECO:0007669"/>
    <property type="project" value="UniProtKB-SubCell"/>
</dbReference>
<dbReference type="GO" id="GO:0000940">
    <property type="term" value="C:outer kinetochore"/>
    <property type="evidence" value="ECO:0000314"/>
    <property type="project" value="UniProtKB"/>
</dbReference>
<dbReference type="GO" id="GO:0051301">
    <property type="term" value="P:cell division"/>
    <property type="evidence" value="ECO:0007669"/>
    <property type="project" value="UniProtKB-KW"/>
</dbReference>
<dbReference type="GO" id="GO:0098653">
    <property type="term" value="P:centromere clustering"/>
    <property type="evidence" value="ECO:0000315"/>
    <property type="project" value="SGD"/>
</dbReference>
<dbReference type="GO" id="GO:0007059">
    <property type="term" value="P:chromosome segregation"/>
    <property type="evidence" value="ECO:0000315"/>
    <property type="project" value="SGD"/>
</dbReference>
<dbReference type="Gene3D" id="3.30.457.50">
    <property type="entry name" value="Chromosome segregation protein Spc25"/>
    <property type="match status" value="2"/>
</dbReference>
<dbReference type="InterPro" id="IPR038066">
    <property type="entry name" value="Spc24_Fungi_globular_sf"/>
</dbReference>
<dbReference type="SUPFAM" id="SSF143026">
    <property type="entry name" value="Kinetochore globular domain"/>
    <property type="match status" value="1"/>
</dbReference>
<feature type="initiator methionine" description="Removed" evidence="9">
    <location>
        <position position="1"/>
    </location>
</feature>
<feature type="chain" id="PRO_0000202622" description="Kinetochore protein SPC25">
    <location>
        <begin position="2"/>
        <end position="221"/>
    </location>
</feature>
<feature type="region of interest" description="Disordered" evidence="2">
    <location>
        <begin position="76"/>
        <end position="101"/>
    </location>
</feature>
<feature type="coiled-coil region" evidence="1">
    <location>
        <begin position="9"/>
        <end position="112"/>
    </location>
</feature>
<feature type="compositionally biased region" description="Basic and acidic residues" evidence="2">
    <location>
        <begin position="83"/>
        <end position="97"/>
    </location>
</feature>
<feature type="modified residue" description="N-acetylalanine" evidence="9">
    <location>
        <position position="2"/>
    </location>
</feature>
<feature type="helix" evidence="10">
    <location>
        <begin position="133"/>
        <end position="145"/>
    </location>
</feature>
<feature type="strand" evidence="10">
    <location>
        <begin position="147"/>
        <end position="151"/>
    </location>
</feature>
<feature type="strand" evidence="10">
    <location>
        <begin position="153"/>
        <end position="155"/>
    </location>
</feature>
<feature type="strand" evidence="10">
    <location>
        <begin position="158"/>
        <end position="164"/>
    </location>
</feature>
<feature type="strand" evidence="10">
    <location>
        <begin position="169"/>
        <end position="173"/>
    </location>
</feature>
<feature type="strand" evidence="10">
    <location>
        <begin position="175"/>
        <end position="178"/>
    </location>
</feature>
<feature type="strand" evidence="10">
    <location>
        <begin position="180"/>
        <end position="186"/>
    </location>
</feature>
<feature type="helix" evidence="10">
    <location>
        <begin position="190"/>
        <end position="201"/>
    </location>
</feature>
<feature type="strand" evidence="11">
    <location>
        <begin position="202"/>
        <end position="204"/>
    </location>
</feature>
<feature type="helix" evidence="10">
    <location>
        <begin position="206"/>
        <end position="220"/>
    </location>
</feature>
<organism>
    <name type="scientific">Saccharomyces cerevisiae (strain ATCC 204508 / S288c)</name>
    <name type="common">Baker's yeast</name>
    <dbReference type="NCBI Taxonomy" id="559292"/>
    <lineage>
        <taxon>Eukaryota</taxon>
        <taxon>Fungi</taxon>
        <taxon>Dikarya</taxon>
        <taxon>Ascomycota</taxon>
        <taxon>Saccharomycotina</taxon>
        <taxon>Saccharomycetes</taxon>
        <taxon>Saccharomycetales</taxon>
        <taxon>Saccharomycetaceae</taxon>
        <taxon>Saccharomyces</taxon>
    </lineage>
</organism>
<comment type="function">
    <text evidence="4 5">Acts as a component of the essential kinetochore-associated NDC80 complex, which is involved in chromosome segregation and spindle checkpoint activity.</text>
</comment>
<comment type="subunit">
    <text evidence="4 7">Component of the NDC80 complex, which consists of TID3/NDC80, NUF2, SPC24 and SPC25. The NDC80 complex is formed by two subcomplexes, TID3/NDC80-NUF2 and SPC24-SPC25, which are joined end-to-end through their coiled-coil domains. It has a rod-like structure with a length of 570 Angstroms and globular domains at either end. The TID3/NDC80-NUF2 globular domains are probably directed to microtubules, the SPC24-SPC25 globular domains to the centromere.</text>
</comment>
<comment type="interaction">
    <interactant intactId="EBI-22458">
        <id>P40014</id>
    </interactant>
    <interactant intactId="EBI-25247">
        <id>P40460</id>
        <label>NDC80</label>
    </interactant>
    <organismsDiffer>false</organismsDiffer>
    <experiments>13</experiments>
</comment>
<comment type="interaction">
    <interactant intactId="EBI-22458">
        <id>P40014</id>
    </interactant>
    <interactant intactId="EBI-12377">
        <id>P33895</id>
        <label>NUF2</label>
    </interactant>
    <organismsDiffer>false</organismsDiffer>
    <experiments>6</experiments>
</comment>
<comment type="interaction">
    <interactant intactId="EBI-22458">
        <id>P40014</id>
    </interactant>
    <interactant intactId="EBI-27228">
        <id>Q04477</id>
        <label>SPC24</label>
    </interactant>
    <organismsDiffer>false</organismsDiffer>
    <experiments>24</experiments>
</comment>
<comment type="subcellular location">
    <subcellularLocation>
        <location evidence="3">Nucleus</location>
    </subcellularLocation>
    <subcellularLocation>
        <location evidence="3 4">Chromosome</location>
        <location evidence="3 4">Centromere</location>
        <location evidence="3 4">Kinetochore</location>
    </subcellularLocation>
    <text evidence="3">Associated with kinetochores.</text>
</comment>
<comment type="miscellaneous">
    <text evidence="6">Present with 3280 molecules/cell in log phase SD medium.</text>
</comment>
<comment type="similarity">
    <text evidence="8">Belongs to the SPC25 family.</text>
</comment>
<evidence type="ECO:0000255" key="1"/>
<evidence type="ECO:0000256" key="2">
    <source>
        <dbReference type="SAM" id="MobiDB-lite"/>
    </source>
</evidence>
<evidence type="ECO:0000269" key="3">
    <source>
    </source>
</evidence>
<evidence type="ECO:0000269" key="4">
    <source>
    </source>
</evidence>
<evidence type="ECO:0000269" key="5">
    <source>
    </source>
</evidence>
<evidence type="ECO:0000269" key="6">
    <source>
    </source>
</evidence>
<evidence type="ECO:0000269" key="7">
    <source>
    </source>
</evidence>
<evidence type="ECO:0000305" key="8"/>
<evidence type="ECO:0007744" key="9">
    <source>
    </source>
</evidence>
<evidence type="ECO:0007829" key="10">
    <source>
        <dbReference type="PDB" id="5T6J"/>
    </source>
</evidence>
<evidence type="ECO:0007829" key="11">
    <source>
        <dbReference type="PDB" id="8V10"/>
    </source>
</evidence>
<accession>P40014</accession>
<accession>D3DLR6</accession>
<protein>
    <recommendedName>
        <fullName>Kinetochore protein SPC25</fullName>
    </recommendedName>
</protein>
<proteinExistence type="evidence at protein level"/>
<keyword id="KW-0002">3D-structure</keyword>
<keyword id="KW-0007">Acetylation</keyword>
<keyword id="KW-0131">Cell cycle</keyword>
<keyword id="KW-0132">Cell division</keyword>
<keyword id="KW-0137">Centromere</keyword>
<keyword id="KW-0158">Chromosome</keyword>
<keyword id="KW-0175">Coiled coil</keyword>
<keyword id="KW-0995">Kinetochore</keyword>
<keyword id="KW-0498">Mitosis</keyword>
<keyword id="KW-0539">Nucleus</keyword>
<keyword id="KW-1185">Reference proteome</keyword>
<gene>
    <name type="primary">SPC25</name>
    <name type="ordered locus">YER018C</name>
</gene>
<reference key="1">
    <citation type="journal article" date="1997" name="Nature">
        <title>The nucleotide sequence of Saccharomyces cerevisiae chromosome V.</title>
        <authorList>
            <person name="Dietrich F.S."/>
            <person name="Mulligan J.T."/>
            <person name="Hennessy K.M."/>
            <person name="Yelton M.A."/>
            <person name="Allen E."/>
            <person name="Araujo R."/>
            <person name="Aviles E."/>
            <person name="Berno A."/>
            <person name="Brennan T."/>
            <person name="Carpenter J."/>
            <person name="Chen E."/>
            <person name="Cherry J.M."/>
            <person name="Chung E."/>
            <person name="Duncan M."/>
            <person name="Guzman E."/>
            <person name="Hartzell G."/>
            <person name="Hunicke-Smith S."/>
            <person name="Hyman R.W."/>
            <person name="Kayser A."/>
            <person name="Komp C."/>
            <person name="Lashkari D."/>
            <person name="Lew H."/>
            <person name="Lin D."/>
            <person name="Mosedale D."/>
            <person name="Nakahara K."/>
            <person name="Namath A."/>
            <person name="Norgren R."/>
            <person name="Oefner P."/>
            <person name="Oh C."/>
            <person name="Petel F.X."/>
            <person name="Roberts D."/>
            <person name="Sehl P."/>
            <person name="Schramm S."/>
            <person name="Shogren T."/>
            <person name="Smith V."/>
            <person name="Taylor P."/>
            <person name="Wei Y."/>
            <person name="Botstein D."/>
            <person name="Davis R.W."/>
        </authorList>
    </citation>
    <scope>NUCLEOTIDE SEQUENCE [LARGE SCALE GENOMIC DNA]</scope>
    <source>
        <strain>ATCC 204508 / S288c</strain>
    </source>
</reference>
<reference key="2">
    <citation type="journal article" date="2014" name="G3 (Bethesda)">
        <title>The reference genome sequence of Saccharomyces cerevisiae: Then and now.</title>
        <authorList>
            <person name="Engel S.R."/>
            <person name="Dietrich F.S."/>
            <person name="Fisk D.G."/>
            <person name="Binkley G."/>
            <person name="Balakrishnan R."/>
            <person name="Costanzo M.C."/>
            <person name="Dwight S.S."/>
            <person name="Hitz B.C."/>
            <person name="Karra K."/>
            <person name="Nash R.S."/>
            <person name="Weng S."/>
            <person name="Wong E.D."/>
            <person name="Lloyd P."/>
            <person name="Skrzypek M.S."/>
            <person name="Miyasato S.R."/>
            <person name="Simison M."/>
            <person name="Cherry J.M."/>
        </authorList>
    </citation>
    <scope>GENOME REANNOTATION</scope>
    <source>
        <strain>ATCC 204508 / S288c</strain>
    </source>
</reference>
<reference key="3">
    <citation type="journal article" date="1994" name="Yeast">
        <title>Identification of a set of yeast genes coding for a novel family of putative ATPases with high similarity to constituents of the 26S protease complex.</title>
        <authorList>
            <person name="Schnall R."/>
            <person name="Mannhaupt G."/>
            <person name="Stucka R."/>
            <person name="Tauer R."/>
            <person name="Ehnle S."/>
            <person name="Schwarzlose C."/>
            <person name="Vetter I."/>
            <person name="Feldmann H."/>
        </authorList>
    </citation>
    <scope>NUCLEOTIDE SEQUENCE [GENOMIC DNA] OF 67-221</scope>
    <source>
        <strain>ATCC 204508 / S288c</strain>
    </source>
</reference>
<reference key="4">
    <citation type="journal article" date="2001" name="EMBO J.">
        <title>The budding yeast proteins Spc24p and Spc25p interact with Ndc80p and Nuf2p at the kinetochore and are important for kinetochore clustering and checkpoint control.</title>
        <authorList>
            <person name="Janke C."/>
            <person name="Ortiz J."/>
            <person name="Lechner J."/>
            <person name="Shevchenko A."/>
            <person name="Shevchenko A."/>
            <person name="Magiera M.M."/>
            <person name="Schramm C."/>
            <person name="Schiebel E."/>
        </authorList>
    </citation>
    <scope>SUBCELLULAR LOCATION</scope>
    <scope>INTERACTION WITH TID3 AND NUF2</scope>
</reference>
<reference key="5">
    <citation type="journal article" date="2002" name="Mol. Microbiol.">
        <title>Spc24 interacts with Mps2 and is required for chromosome segregation, but is not implicated in spindle pole body duplication.</title>
        <authorList>
            <person name="Le Masson I."/>
            <person name="Saveanu C."/>
            <person name="Chevalier A."/>
            <person name="Namane A."/>
            <person name="Gobin R."/>
            <person name="Fromont-Racine M."/>
            <person name="Jacquier A."/>
            <person name="Mann C."/>
        </authorList>
    </citation>
    <scope>INTERACTION WITH NDC80 AND SPC24</scope>
</reference>
<reference key="6">
    <citation type="journal article" date="2001" name="J. Cell Biol.">
        <title>The Ndc80p complex from Saccharomyces cerevisiae contains conserved centromere components and has a function in chromosome segregation.</title>
        <authorList>
            <person name="Wigge P.A."/>
            <person name="Kilmartin J.V."/>
        </authorList>
    </citation>
    <scope>FUNCTION OF THE NDC80 COMPLEX</scope>
    <scope>SUBCELLULAR LOCATION</scope>
    <scope>IDENTIFICATION IN THE NDC80 COMPLEX</scope>
</reference>
<reference key="7">
    <citation type="journal article" date="2003" name="Genes Dev.">
        <title>The highly conserved Ndc80 complex is required for kinetochore assembly, chromosome congression, and spindle checkpoint activity.</title>
        <authorList>
            <person name="McCleland M.L."/>
            <person name="Gardner R.D."/>
            <person name="Kallio M.J."/>
            <person name="Daum J.R."/>
            <person name="Gorbsky G.J."/>
            <person name="Burke D.J."/>
            <person name="Stukenberg P.T."/>
        </authorList>
    </citation>
    <scope>FUNCTION OF THE NDC80 COMPLEX</scope>
</reference>
<reference key="8">
    <citation type="journal article" date="2003" name="Nature">
        <title>Global analysis of protein expression in yeast.</title>
        <authorList>
            <person name="Ghaemmaghami S."/>
            <person name="Huh W.-K."/>
            <person name="Bower K."/>
            <person name="Howson R.W."/>
            <person name="Belle A."/>
            <person name="Dephoure N."/>
            <person name="O'Shea E.K."/>
            <person name="Weissman J.S."/>
        </authorList>
    </citation>
    <scope>LEVEL OF PROTEIN EXPRESSION [LARGE SCALE ANALYSIS]</scope>
</reference>
<reference key="9">
    <citation type="journal article" date="2004" name="Mol. Biol. Cell">
        <title>The fission yeast kinetochore component Spc7 associates with the EB1 family member Mal3 and is required for kinetochore-spindle association.</title>
        <authorList>
            <person name="Kerres A."/>
            <person name="Vietmeier-Decker C."/>
            <person name="Ortiz J."/>
            <person name="Karig I."/>
            <person name="Beuter C."/>
            <person name="Hegemann J."/>
            <person name="Lechner J."/>
            <person name="Fleig U."/>
        </authorList>
    </citation>
    <scope>IDENTIFICATION IN THE NDC80 COMPLEX</scope>
</reference>
<reference key="10">
    <citation type="journal article" date="2012" name="Proc. Natl. Acad. Sci. U.S.A.">
        <title>N-terminal acetylome analyses and functional insights of the N-terminal acetyltransferase NatB.</title>
        <authorList>
            <person name="Van Damme P."/>
            <person name="Lasa M."/>
            <person name="Polevoda B."/>
            <person name="Gazquez C."/>
            <person name="Elosegui-Artola A."/>
            <person name="Kim D.S."/>
            <person name="De Juan-Pardo E."/>
            <person name="Demeyer K."/>
            <person name="Hole K."/>
            <person name="Larrea E."/>
            <person name="Timmerman E."/>
            <person name="Prieto J."/>
            <person name="Arnesen T."/>
            <person name="Sherman F."/>
            <person name="Gevaert K."/>
            <person name="Aldabe R."/>
        </authorList>
    </citation>
    <scope>ACETYLATION [LARGE SCALE ANALYSIS] AT ALA-2</scope>
    <scope>CLEAVAGE OF INITIATOR METHIONINE [LARGE SCALE ANALYSIS]</scope>
    <scope>IDENTIFICATION BY MASS SPECTROMETRY [LARGE SCALE ANALYSIS]</scope>
</reference>
<reference key="11">
    <citation type="journal article" date="2005" name="Proc. Natl. Acad. Sci. U.S.A.">
        <title>Molecular organization of the Ndc80 complex, an essential kinetochore component.</title>
        <authorList>
            <person name="Wei R.R."/>
            <person name="Sorger P.K."/>
            <person name="Harrison S.C."/>
        </authorList>
    </citation>
    <scope>3D-STRUCTURE MODELING OF THE NDC80 COMPLEX</scope>
</reference>
<name>SPC25_YEAST</name>
<sequence length="221" mass="25244">MASIDAFSDLERRMDGFQKDVAQVLARQQNHARQQLQQFQAEMRQLHNQHQHLIDELQRLATQRTALQQQIHAAQQATNTTREQWRSYHERESELSRRQSTLAAQSRELDSLLQQRGKECVQLRARWAAQSGNDAAEVALYERLLQLRVLPGASDVHDVRFVFGDDSRCWIEVAMHGDHVIGNSHPALDPKSRATLEHVLTVQGDLAAFLVVARDMLLASL</sequence>